<evidence type="ECO:0000250" key="1">
    <source>
        <dbReference type="UniProtKB" id="Q3KNM2"/>
    </source>
</evidence>
<evidence type="ECO:0000255" key="2"/>
<evidence type="ECO:0000255" key="3">
    <source>
        <dbReference type="PROSITE-ProRule" id="PRU00623"/>
    </source>
</evidence>
<evidence type="ECO:0000269" key="4">
    <source>
    </source>
</evidence>
<evidence type="ECO:0000269" key="5">
    <source>
    </source>
</evidence>
<evidence type="ECO:0000269" key="6">
    <source>
    </source>
</evidence>
<evidence type="ECO:0000269" key="7">
    <source>
    </source>
</evidence>
<evidence type="ECO:0000269" key="8">
    <source>
    </source>
</evidence>
<evidence type="ECO:0000269" key="9">
    <source>
    </source>
</evidence>
<evidence type="ECO:0000269" key="10">
    <source>
    </source>
</evidence>
<evidence type="ECO:0000269" key="11">
    <source>
    </source>
</evidence>
<evidence type="ECO:0000269" key="12">
    <source>
    </source>
</evidence>
<evidence type="ECO:0000269" key="13">
    <source>
    </source>
</evidence>
<evidence type="ECO:0000269" key="14">
    <source>
    </source>
</evidence>
<evidence type="ECO:0000269" key="15">
    <source>
    </source>
</evidence>
<evidence type="ECO:0000305" key="16"/>
<evidence type="ECO:0000312" key="17">
    <source>
        <dbReference type="HGNC" id="HGNC:26025"/>
    </source>
</evidence>
<name>MARH5_HUMAN</name>
<proteinExistence type="evidence at protein level"/>
<reference key="1">
    <citation type="journal article" date="2006" name="EMBO Rep.">
        <title>MARCH-V is a novel mitofusin 2- and Drp1-binding protein able to change mitochondrial morphology.</title>
        <authorList>
            <person name="Nakamura N."/>
            <person name="Kimura Y."/>
            <person name="Tokuda M."/>
            <person name="Honda S."/>
            <person name="Hirose S."/>
        </authorList>
    </citation>
    <scope>NUCLEOTIDE SEQUENCE [MRNA]</scope>
    <scope>INTERACTION WITH MFN2 AND DNM1L</scope>
    <scope>SUBCELLULAR LOCATION</scope>
</reference>
<reference key="2">
    <citation type="journal article" date="2004" name="Nat. Genet.">
        <title>Complete sequencing and characterization of 21,243 full-length human cDNAs.</title>
        <authorList>
            <person name="Ota T."/>
            <person name="Suzuki Y."/>
            <person name="Nishikawa T."/>
            <person name="Otsuki T."/>
            <person name="Sugiyama T."/>
            <person name="Irie R."/>
            <person name="Wakamatsu A."/>
            <person name="Hayashi K."/>
            <person name="Sato H."/>
            <person name="Nagai K."/>
            <person name="Kimura K."/>
            <person name="Makita H."/>
            <person name="Sekine M."/>
            <person name="Obayashi M."/>
            <person name="Nishi T."/>
            <person name="Shibahara T."/>
            <person name="Tanaka T."/>
            <person name="Ishii S."/>
            <person name="Yamamoto J."/>
            <person name="Saito K."/>
            <person name="Kawai Y."/>
            <person name="Isono Y."/>
            <person name="Nakamura Y."/>
            <person name="Nagahari K."/>
            <person name="Murakami K."/>
            <person name="Yasuda T."/>
            <person name="Iwayanagi T."/>
            <person name="Wagatsuma M."/>
            <person name="Shiratori A."/>
            <person name="Sudo H."/>
            <person name="Hosoiri T."/>
            <person name="Kaku Y."/>
            <person name="Kodaira H."/>
            <person name="Kondo H."/>
            <person name="Sugawara M."/>
            <person name="Takahashi M."/>
            <person name="Kanda K."/>
            <person name="Yokoi T."/>
            <person name="Furuya T."/>
            <person name="Kikkawa E."/>
            <person name="Omura Y."/>
            <person name="Abe K."/>
            <person name="Kamihara K."/>
            <person name="Katsuta N."/>
            <person name="Sato K."/>
            <person name="Tanikawa M."/>
            <person name="Yamazaki M."/>
            <person name="Ninomiya K."/>
            <person name="Ishibashi T."/>
            <person name="Yamashita H."/>
            <person name="Murakawa K."/>
            <person name="Fujimori K."/>
            <person name="Tanai H."/>
            <person name="Kimata M."/>
            <person name="Watanabe M."/>
            <person name="Hiraoka S."/>
            <person name="Chiba Y."/>
            <person name="Ishida S."/>
            <person name="Ono Y."/>
            <person name="Takiguchi S."/>
            <person name="Watanabe S."/>
            <person name="Yosida M."/>
            <person name="Hotuta T."/>
            <person name="Kusano J."/>
            <person name="Kanehori K."/>
            <person name="Takahashi-Fujii A."/>
            <person name="Hara H."/>
            <person name="Tanase T.-O."/>
            <person name="Nomura Y."/>
            <person name="Togiya S."/>
            <person name="Komai F."/>
            <person name="Hara R."/>
            <person name="Takeuchi K."/>
            <person name="Arita M."/>
            <person name="Imose N."/>
            <person name="Musashino K."/>
            <person name="Yuuki H."/>
            <person name="Oshima A."/>
            <person name="Sasaki N."/>
            <person name="Aotsuka S."/>
            <person name="Yoshikawa Y."/>
            <person name="Matsunawa H."/>
            <person name="Ichihara T."/>
            <person name="Shiohata N."/>
            <person name="Sano S."/>
            <person name="Moriya S."/>
            <person name="Momiyama H."/>
            <person name="Satoh N."/>
            <person name="Takami S."/>
            <person name="Terashima Y."/>
            <person name="Suzuki O."/>
            <person name="Nakagawa S."/>
            <person name="Senoh A."/>
            <person name="Mizoguchi H."/>
            <person name="Goto Y."/>
            <person name="Shimizu F."/>
            <person name="Wakebe H."/>
            <person name="Hishigaki H."/>
            <person name="Watanabe T."/>
            <person name="Sugiyama A."/>
            <person name="Takemoto M."/>
            <person name="Kawakami B."/>
            <person name="Yamazaki M."/>
            <person name="Watanabe K."/>
            <person name="Kumagai A."/>
            <person name="Itakura S."/>
            <person name="Fukuzumi Y."/>
            <person name="Fujimori Y."/>
            <person name="Komiyama M."/>
            <person name="Tashiro H."/>
            <person name="Tanigami A."/>
            <person name="Fujiwara T."/>
            <person name="Ono T."/>
            <person name="Yamada K."/>
            <person name="Fujii Y."/>
            <person name="Ozaki K."/>
            <person name="Hirao M."/>
            <person name="Ohmori Y."/>
            <person name="Kawabata A."/>
            <person name="Hikiji T."/>
            <person name="Kobatake N."/>
            <person name="Inagaki H."/>
            <person name="Ikema Y."/>
            <person name="Okamoto S."/>
            <person name="Okitani R."/>
            <person name="Kawakami T."/>
            <person name="Noguchi S."/>
            <person name="Itoh T."/>
            <person name="Shigeta K."/>
            <person name="Senba T."/>
            <person name="Matsumura K."/>
            <person name="Nakajima Y."/>
            <person name="Mizuno T."/>
            <person name="Morinaga M."/>
            <person name="Sasaki M."/>
            <person name="Togashi T."/>
            <person name="Oyama M."/>
            <person name="Hata H."/>
            <person name="Watanabe M."/>
            <person name="Komatsu T."/>
            <person name="Mizushima-Sugano J."/>
            <person name="Satoh T."/>
            <person name="Shirai Y."/>
            <person name="Takahashi Y."/>
            <person name="Nakagawa K."/>
            <person name="Okumura K."/>
            <person name="Nagase T."/>
            <person name="Nomura N."/>
            <person name="Kikuchi H."/>
            <person name="Masuho Y."/>
            <person name="Yamashita R."/>
            <person name="Nakai K."/>
            <person name="Yada T."/>
            <person name="Nakamura Y."/>
            <person name="Ohara O."/>
            <person name="Isogai T."/>
            <person name="Sugano S."/>
        </authorList>
    </citation>
    <scope>NUCLEOTIDE SEQUENCE [LARGE SCALE MRNA]</scope>
</reference>
<reference key="3">
    <citation type="journal article" date="2004" name="Nature">
        <title>The DNA sequence and comparative analysis of human chromosome 10.</title>
        <authorList>
            <person name="Deloukas P."/>
            <person name="Earthrowl M.E."/>
            <person name="Grafham D.V."/>
            <person name="Rubenfield M."/>
            <person name="French L."/>
            <person name="Steward C.A."/>
            <person name="Sims S.K."/>
            <person name="Jones M.C."/>
            <person name="Searle S."/>
            <person name="Scott C."/>
            <person name="Howe K."/>
            <person name="Hunt S.E."/>
            <person name="Andrews T.D."/>
            <person name="Gilbert J.G.R."/>
            <person name="Swarbreck D."/>
            <person name="Ashurst J.L."/>
            <person name="Taylor A."/>
            <person name="Battles J."/>
            <person name="Bird C.P."/>
            <person name="Ainscough R."/>
            <person name="Almeida J.P."/>
            <person name="Ashwell R.I.S."/>
            <person name="Ambrose K.D."/>
            <person name="Babbage A.K."/>
            <person name="Bagguley C.L."/>
            <person name="Bailey J."/>
            <person name="Banerjee R."/>
            <person name="Bates K."/>
            <person name="Beasley H."/>
            <person name="Bray-Allen S."/>
            <person name="Brown A.J."/>
            <person name="Brown J.Y."/>
            <person name="Burford D.C."/>
            <person name="Burrill W."/>
            <person name="Burton J."/>
            <person name="Cahill P."/>
            <person name="Camire D."/>
            <person name="Carter N.P."/>
            <person name="Chapman J.C."/>
            <person name="Clark S.Y."/>
            <person name="Clarke G."/>
            <person name="Clee C.M."/>
            <person name="Clegg S."/>
            <person name="Corby N."/>
            <person name="Coulson A."/>
            <person name="Dhami P."/>
            <person name="Dutta I."/>
            <person name="Dunn M."/>
            <person name="Faulkner L."/>
            <person name="Frankish A."/>
            <person name="Frankland J.A."/>
            <person name="Garner P."/>
            <person name="Garnett J."/>
            <person name="Gribble S."/>
            <person name="Griffiths C."/>
            <person name="Grocock R."/>
            <person name="Gustafson E."/>
            <person name="Hammond S."/>
            <person name="Harley J.L."/>
            <person name="Hart E."/>
            <person name="Heath P.D."/>
            <person name="Ho T.P."/>
            <person name="Hopkins B."/>
            <person name="Horne J."/>
            <person name="Howden P.J."/>
            <person name="Huckle E."/>
            <person name="Hynds C."/>
            <person name="Johnson C."/>
            <person name="Johnson D."/>
            <person name="Kana A."/>
            <person name="Kay M."/>
            <person name="Kimberley A.M."/>
            <person name="Kershaw J.K."/>
            <person name="Kokkinaki M."/>
            <person name="Laird G.K."/>
            <person name="Lawlor S."/>
            <person name="Lee H.M."/>
            <person name="Leongamornlert D.A."/>
            <person name="Laird G."/>
            <person name="Lloyd C."/>
            <person name="Lloyd D.M."/>
            <person name="Loveland J."/>
            <person name="Lovell J."/>
            <person name="McLaren S."/>
            <person name="McLay K.E."/>
            <person name="McMurray A."/>
            <person name="Mashreghi-Mohammadi M."/>
            <person name="Matthews L."/>
            <person name="Milne S."/>
            <person name="Nickerson T."/>
            <person name="Nguyen M."/>
            <person name="Overton-Larty E."/>
            <person name="Palmer S.A."/>
            <person name="Pearce A.V."/>
            <person name="Peck A.I."/>
            <person name="Pelan S."/>
            <person name="Phillimore B."/>
            <person name="Porter K."/>
            <person name="Rice C.M."/>
            <person name="Rogosin A."/>
            <person name="Ross M.T."/>
            <person name="Sarafidou T."/>
            <person name="Sehra H.K."/>
            <person name="Shownkeen R."/>
            <person name="Skuce C.D."/>
            <person name="Smith M."/>
            <person name="Standring L."/>
            <person name="Sycamore N."/>
            <person name="Tester J."/>
            <person name="Thorpe A."/>
            <person name="Torcasso W."/>
            <person name="Tracey A."/>
            <person name="Tromans A."/>
            <person name="Tsolas J."/>
            <person name="Wall M."/>
            <person name="Walsh J."/>
            <person name="Wang H."/>
            <person name="Weinstock K."/>
            <person name="West A.P."/>
            <person name="Willey D.L."/>
            <person name="Whitehead S.L."/>
            <person name="Wilming L."/>
            <person name="Wray P.W."/>
            <person name="Young L."/>
            <person name="Chen Y."/>
            <person name="Lovering R.C."/>
            <person name="Moschonas N.K."/>
            <person name="Siebert R."/>
            <person name="Fechtel K."/>
            <person name="Bentley D."/>
            <person name="Durbin R.M."/>
            <person name="Hubbard T."/>
            <person name="Doucette-Stamm L."/>
            <person name="Beck S."/>
            <person name="Smith D.R."/>
            <person name="Rogers J."/>
        </authorList>
    </citation>
    <scope>NUCLEOTIDE SEQUENCE [LARGE SCALE GENOMIC DNA]</scope>
</reference>
<reference key="4">
    <citation type="journal article" date="2004" name="Genome Res.">
        <title>The status, quality, and expansion of the NIH full-length cDNA project: the Mammalian Gene Collection (MGC).</title>
        <authorList>
            <consortium name="The MGC Project Team"/>
        </authorList>
    </citation>
    <scope>NUCLEOTIDE SEQUENCE [LARGE SCALE MRNA]</scope>
    <source>
        <tissue>Uterus</tissue>
    </source>
</reference>
<reference key="5">
    <citation type="journal article" date="2004" name="J. Virol.">
        <title>Downregulation of major histocompatibility complex class I by human ubiquitin ligases related to viral immune evasion proteins.</title>
        <authorList>
            <person name="Bartee E."/>
            <person name="Mansouri M."/>
            <person name="Hovey Nerenberg B.T."/>
            <person name="Gouveia K."/>
            <person name="Frueh K."/>
        </authorList>
    </citation>
    <scope>SUBCELLULAR LOCATION</scope>
</reference>
<reference key="6">
    <citation type="journal article" date="2006" name="EMBO J.">
        <title>A novel mitochondrial ubiquitin ligase plays a critical role in mitochondrial dynamics.</title>
        <authorList>
            <person name="Yonashiro R."/>
            <person name="Ishido S."/>
            <person name="Kyo S."/>
            <person name="Fukuda T."/>
            <person name="Goto E."/>
            <person name="Matsuki Y."/>
            <person name="Ohmura-Hoshino M."/>
            <person name="Sada K."/>
            <person name="Hotta H."/>
            <person name="Yamamura H."/>
            <person name="Inatome R."/>
            <person name="Yanagi S."/>
        </authorList>
    </citation>
    <scope>FUNCTION AS AN E3 UBIQUITIN LIGASE FOR FIS1 AND DNM1L AND AS A REGULATOR OF MITOCHONDRIAL FISSION</scope>
    <scope>AUTOUBIQUITINATION</scope>
    <scope>PTM</scope>
    <scope>SUBCELLULAR LOCATION</scope>
    <scope>INTERACTION WITH FIS1 AND DNM1L</scope>
    <scope>TISSUE SPECIFICITY</scope>
    <scope>MUTAGENESIS OF CYS-65 AND CYS-68</scope>
</reference>
<reference key="7">
    <citation type="journal article" date="2007" name="J. Cell Biol.">
        <title>The mitochondrial E3 ubiquitin ligase MARCH5 is required for Drp1 dependent mitochondrial division.</title>
        <authorList>
            <person name="Karbowski M."/>
            <person name="Neutzner A."/>
            <person name="Youle R.J."/>
        </authorList>
    </citation>
    <scope>FUNCTION AS A REGULATOR OF MITOCHONDRIAL MORPHOLOGY</scope>
    <scope>MUTAGENESIS OF HIS-43; CYS-65 AND CYS-68</scope>
    <scope>SUBUNIT</scope>
    <scope>SUBCELLULAR LOCATION</scope>
</reference>
<reference key="8">
    <citation type="journal article" date="2009" name="Mol. Biol. Cell">
        <title>Mitochondrial ubiquitin ligase MITOL ubiquitinates mutant SOD1 and attenuates mutant SOD1-induced reactive oxygen species generation.</title>
        <authorList>
            <person name="Yonashiro R."/>
            <person name="Sugiura A."/>
            <person name="Miyachi M."/>
            <person name="Fukuda T."/>
            <person name="Matsushita N."/>
            <person name="Inatome R."/>
            <person name="Ogata Y."/>
            <person name="Suzuki T."/>
            <person name="Dohmae N."/>
            <person name="Yanagi S."/>
        </authorList>
    </citation>
    <scope>FUNCTION AS A REGULATOR OF MITOCHONDRIAL QUALITY CONTROL</scope>
    <scope>SUBCELLULAR LOCATION</scope>
</reference>
<reference key="9">
    <citation type="journal article" date="2010" name="J. Cell Sci.">
        <title>Loss of MARCH5 mitochondrial E3 ubiquitin ligase induces cellular senescence through dynamin-related protein 1 and mitofusin 1.</title>
        <authorList>
            <person name="Park Y.Y."/>
            <person name="Lee S."/>
            <person name="Karbowski M."/>
            <person name="Neutzner A."/>
            <person name="Youle R.J."/>
            <person name="Cho H."/>
        </authorList>
    </citation>
    <scope>FUNCTION AS AN E3 UBIQUITIN LIGASE FOR MFN1 AND AS A POSITIVE REGULATOR OF MITOCHONDRIAL FISSION</scope>
    <scope>MUTAGENESIS OF HIS-43</scope>
    <scope>INTERACTION WITH MFN1</scope>
</reference>
<reference key="10">
    <citation type="journal article" date="2011" name="BMC Syst. Biol.">
        <title>Initial characterization of the human central proteome.</title>
        <authorList>
            <person name="Burkard T.R."/>
            <person name="Planyavsky M."/>
            <person name="Kaupe I."/>
            <person name="Breitwieser F.P."/>
            <person name="Buerckstuemmer T."/>
            <person name="Bennett K.L."/>
            <person name="Superti-Furga G."/>
            <person name="Colinge J."/>
        </authorList>
    </citation>
    <scope>IDENTIFICATION BY MASS SPECTROMETRY [LARGE SCALE ANALYSIS]</scope>
</reference>
<reference key="11">
    <citation type="journal article" date="2012" name="Proc. Natl. Acad. Sci. U.S.A.">
        <title>N-terminal acetylome analyses and functional insights of the N-terminal acetyltransferase NatB.</title>
        <authorList>
            <person name="Van Damme P."/>
            <person name="Lasa M."/>
            <person name="Polevoda B."/>
            <person name="Gazquez C."/>
            <person name="Elosegui-Artola A."/>
            <person name="Kim D.S."/>
            <person name="De Juan-Pardo E."/>
            <person name="Demeyer K."/>
            <person name="Hole K."/>
            <person name="Larrea E."/>
            <person name="Timmerman E."/>
            <person name="Prieto J."/>
            <person name="Arnesen T."/>
            <person name="Sherman F."/>
            <person name="Gevaert K."/>
            <person name="Aldabe R."/>
        </authorList>
    </citation>
    <scope>IDENTIFICATION BY MASS SPECTROMETRY [LARGE SCALE ANALYSIS]</scope>
</reference>
<reference key="12">
    <citation type="journal article" date="2014" name="J. Proteomics">
        <title>An enzyme assisted RP-RPLC approach for in-depth analysis of human liver phosphoproteome.</title>
        <authorList>
            <person name="Bian Y."/>
            <person name="Song C."/>
            <person name="Cheng K."/>
            <person name="Dong M."/>
            <person name="Wang F."/>
            <person name="Huang J."/>
            <person name="Sun D."/>
            <person name="Wang L."/>
            <person name="Ye M."/>
            <person name="Zou H."/>
        </authorList>
    </citation>
    <scope>IDENTIFICATION BY MASS SPECTROMETRY [LARGE SCALE ANALYSIS]</scope>
    <source>
        <tissue>Liver</tissue>
    </source>
</reference>
<reference key="13">
    <citation type="journal article" date="2015" name="Proteomics">
        <title>N-terminome analysis of the human mitochondrial proteome.</title>
        <authorList>
            <person name="Vaca Jacome A.S."/>
            <person name="Rabilloud T."/>
            <person name="Schaeffer-Reiss C."/>
            <person name="Rompais M."/>
            <person name="Ayoub D."/>
            <person name="Lane L."/>
            <person name="Bairoch A."/>
            <person name="Van Dorsselaer A."/>
            <person name="Carapito C."/>
        </authorList>
    </citation>
    <scope>IDENTIFICATION BY MASS SPECTROMETRY [LARGE SCALE ANALYSIS]</scope>
</reference>
<reference key="14">
    <citation type="journal article" date="2015" name="Nat. Commun.">
        <title>The mitochondrial ubiquitin ligase MARCH5 resolves MAVS aggregates during antiviral signalling.</title>
        <authorList>
            <person name="Yoo Y.S."/>
            <person name="Park Y.Y."/>
            <person name="Kim J.H."/>
            <person name="Cho H."/>
            <person name="Kim S.H."/>
            <person name="Lee H.S."/>
            <person name="Kim T.H."/>
            <person name="Sun Kim Y."/>
            <person name="Lee Y."/>
            <person name="Kim C.J."/>
            <person name="Jung J.U."/>
            <person name="Lee J.S."/>
            <person name="Cho H."/>
        </authorList>
    </citation>
    <scope>FUNCTION</scope>
    <scope>MUTAGENESIS OF HIS-43</scope>
    <scope>CATALYTIC ACTIVITY</scope>
</reference>
<reference key="15">
    <citation type="journal article" date="2020" name="Cell. Signal.">
        <title>Dual targeting of RIG-I and MAVS by MARCH5 mitochondria ubiquitin ligase in innate immunity.</title>
        <authorList>
            <person name="Park Y.J."/>
            <person name="Oanh N.T.K."/>
            <person name="Heo J."/>
            <person name="Kim S.G."/>
            <person name="Lee H.S."/>
            <person name="Lee H."/>
            <person name="Lee J.H."/>
            <person name="Kang H.C."/>
            <person name="Lim W."/>
            <person name="Yoo Y.S."/>
            <person name="Cho H."/>
        </authorList>
    </citation>
    <scope>FUNCTION</scope>
    <scope>MUTAGENESIS OF HIS-43</scope>
    <scope>CATALYTIC ACTIVITY</scope>
</reference>
<reference key="16">
    <citation type="journal article" date="2023" name="EMBO Rep.">
        <title>MARCH5 promotes STING pathway activation by suppressing polymer formation of oxidized STING.</title>
        <authorList>
            <person name="Son K."/>
            <person name="Jeong S."/>
            <person name="Eom E."/>
            <person name="Kwon D."/>
            <person name="Kang S.J."/>
        </authorList>
    </citation>
    <scope>FUNCTION</scope>
    <scope>CATALYTIC ACTIVITY</scope>
    <scope>SUBCELLULAR LOCATION</scope>
</reference>
<reference key="17">
    <citation type="journal article" date="2023" name="EMBO J.">
        <title>MARCH5-dependent NLRP3 ubiquitination is required for mitochondrial NLRP3-NEK7 complex formation and NLRP3 inflammasome activation.</title>
        <authorList>
            <person name="Park Y.J."/>
            <person name="Dodantenna N."/>
            <person name="Kim Y."/>
            <person name="Kim T.H."/>
            <person name="Lee H.S."/>
            <person name="Yoo Y.S."/>
            <person name="Heo J."/>
            <person name="Lee J.H."/>
            <person name="Kwon M.H."/>
            <person name="Kang H.C."/>
            <person name="Lee J.S."/>
            <person name="Cho H."/>
        </authorList>
    </citation>
    <scope>FUNCTION</scope>
</reference>
<reference key="18">
    <citation type="journal article" date="2025" name="Dev. Cell">
        <title>Ubiquitin ligase MARCH5 controls the formation of mitochondria-derived pre-peroxisomes.</title>
        <authorList>
            <person name="Zheng J."/>
            <person name="Chen J."/>
            <person name="Cao Z."/>
            <person name="Wu K."/>
            <person name="Wang J."/>
            <person name="Guo Y."/>
            <person name="Zhuang M."/>
        </authorList>
    </citation>
    <scope>FUNCTION</scope>
</reference>
<reference key="19">
    <citation type="journal article" date="2025" name="Dev. Cell">
        <title>Outer mitochondrial membrane E3 Ub ligase MARCH5 controls de novo peroxisome biogenesis.</title>
        <authorList>
            <person name="Verhoeven N."/>
            <person name="Oshima Y."/>
            <person name="Cartier E."/>
            <person name="Bippes C.C."/>
            <person name="Neutzner A."/>
            <person name="Boyman L."/>
            <person name="Karbowski M."/>
        </authorList>
    </citation>
    <scope>FUNCTION</scope>
    <scope>SUBCELLULAR LOCATION</scope>
</reference>
<feature type="chain" id="PRO_0000271769" description="E3 ubiquitin-protein ligase MARCHF5">
    <location>
        <begin position="1"/>
        <end position="278"/>
    </location>
</feature>
<feature type="transmembrane region" description="Helical" evidence="2">
    <location>
        <begin position="99"/>
        <end position="119"/>
    </location>
</feature>
<feature type="transmembrane region" description="Helical" evidence="2">
    <location>
        <begin position="139"/>
        <end position="159"/>
    </location>
</feature>
<feature type="transmembrane region" description="Helical" evidence="2">
    <location>
        <begin position="209"/>
        <end position="229"/>
    </location>
</feature>
<feature type="transmembrane region" description="Helical" evidence="2">
    <location>
        <begin position="238"/>
        <end position="258"/>
    </location>
</feature>
<feature type="zinc finger region" description="RING-CH-type" evidence="3">
    <location>
        <begin position="6"/>
        <end position="75"/>
    </location>
</feature>
<feature type="binding site" evidence="3">
    <location>
        <position position="14"/>
    </location>
    <ligand>
        <name>Zn(2+)</name>
        <dbReference type="ChEBI" id="CHEBI:29105"/>
        <label>1</label>
    </ligand>
</feature>
<feature type="binding site" evidence="3">
    <location>
        <position position="17"/>
    </location>
    <ligand>
        <name>Zn(2+)</name>
        <dbReference type="ChEBI" id="CHEBI:29105"/>
        <label>1</label>
    </ligand>
</feature>
<feature type="binding site" evidence="3">
    <location>
        <position position="33"/>
    </location>
    <ligand>
        <name>Zn(2+)</name>
        <dbReference type="ChEBI" id="CHEBI:29105"/>
        <label>2</label>
    </ligand>
</feature>
<feature type="binding site" evidence="3">
    <location>
        <position position="35"/>
    </location>
    <ligand>
        <name>Zn(2+)</name>
        <dbReference type="ChEBI" id="CHEBI:29105"/>
        <label>2</label>
    </ligand>
</feature>
<feature type="binding site" evidence="3">
    <location>
        <position position="43"/>
    </location>
    <ligand>
        <name>Zn(2+)</name>
        <dbReference type="ChEBI" id="CHEBI:29105"/>
        <label>1</label>
    </ligand>
</feature>
<feature type="binding site" evidence="3">
    <location>
        <position position="46"/>
    </location>
    <ligand>
        <name>Zn(2+)</name>
        <dbReference type="ChEBI" id="CHEBI:29105"/>
        <label>1</label>
    </ligand>
</feature>
<feature type="binding site" evidence="3">
    <location>
        <position position="65"/>
    </location>
    <ligand>
        <name>Zn(2+)</name>
        <dbReference type="ChEBI" id="CHEBI:29105"/>
        <label>2</label>
    </ligand>
</feature>
<feature type="binding site" evidence="3">
    <location>
        <position position="68"/>
    </location>
    <ligand>
        <name>Zn(2+)</name>
        <dbReference type="ChEBI" id="CHEBI:29105"/>
        <label>2</label>
    </ligand>
</feature>
<feature type="mutagenesis site" description="Loss of ubiquitin ligase activity, formation of highly interconnected mitochondria, change in mitochondria morphology that in turns triggers senescence, and perinuclear accumulation." evidence="7 9 10">
    <original>H</original>
    <variation>W</variation>
    <location>
        <position position="43"/>
    </location>
</feature>
<feature type="mutagenesis site" description="Loss of E3 ubiquitin ligase activity. Formation of highly interconnected mitochondria and perinuclear accumulation; when associated with S-68." evidence="5 7">
    <original>C</original>
    <variation>S</variation>
    <location>
        <position position="65"/>
    </location>
</feature>
<feature type="mutagenesis site" description="Loss of E3 ubiquitin ligase activity. Formation of highly interconnected mitochondria and perinuclear accumulation; when associated with S-65." evidence="5 7">
    <original>C</original>
    <variation>S</variation>
    <location>
        <position position="68"/>
    </location>
</feature>
<dbReference type="EC" id="2.3.2.27" evidence="10 11"/>
<dbReference type="EMBL" id="AB191202">
    <property type="protein sequence ID" value="BAF02285.1"/>
    <property type="molecule type" value="mRNA"/>
</dbReference>
<dbReference type="EMBL" id="AK000452">
    <property type="protein sequence ID" value="BAA91173.1"/>
    <property type="molecule type" value="mRNA"/>
</dbReference>
<dbReference type="EMBL" id="AL158040">
    <property type="status" value="NOT_ANNOTATED_CDS"/>
    <property type="molecule type" value="Genomic_DNA"/>
</dbReference>
<dbReference type="EMBL" id="AL161652">
    <property type="status" value="NOT_ANNOTATED_CDS"/>
    <property type="molecule type" value="Genomic_DNA"/>
</dbReference>
<dbReference type="EMBL" id="BC015480">
    <property type="protein sequence ID" value="AAH15480.1"/>
    <property type="molecule type" value="mRNA"/>
</dbReference>
<dbReference type="CCDS" id="CCDS7420.1"/>
<dbReference type="RefSeq" id="NP_060294.1">
    <property type="nucleotide sequence ID" value="NM_017824.5"/>
</dbReference>
<dbReference type="BioGRID" id="120105">
    <property type="interactions" value="209"/>
</dbReference>
<dbReference type="FunCoup" id="Q9NX47">
    <property type="interactions" value="2375"/>
</dbReference>
<dbReference type="IntAct" id="Q9NX47">
    <property type="interactions" value="42"/>
</dbReference>
<dbReference type="MINT" id="Q9NX47"/>
<dbReference type="STRING" id="9606.ENSP00000351813"/>
<dbReference type="GlyGen" id="Q9NX47">
    <property type="glycosylation" value="2 sites, 1 O-linked glycan (2 sites)"/>
</dbReference>
<dbReference type="iPTMnet" id="Q9NX47"/>
<dbReference type="MetOSite" id="Q9NX47"/>
<dbReference type="PhosphoSitePlus" id="Q9NX47"/>
<dbReference type="SwissPalm" id="Q9NX47"/>
<dbReference type="BioMuta" id="MARCH5"/>
<dbReference type="DMDM" id="74762759"/>
<dbReference type="jPOST" id="Q9NX47"/>
<dbReference type="MassIVE" id="Q9NX47"/>
<dbReference type="PaxDb" id="9606-ENSP00000351813"/>
<dbReference type="PeptideAtlas" id="Q9NX47"/>
<dbReference type="ProteomicsDB" id="83038"/>
<dbReference type="Pumba" id="Q9NX47"/>
<dbReference type="Antibodypedia" id="30397">
    <property type="antibodies" value="194 antibodies from 27 providers"/>
</dbReference>
<dbReference type="DNASU" id="54708"/>
<dbReference type="Ensembl" id="ENST00000358935.3">
    <property type="protein sequence ID" value="ENSP00000351813.2"/>
    <property type="gene ID" value="ENSG00000198060.10"/>
</dbReference>
<dbReference type="GeneID" id="54708"/>
<dbReference type="KEGG" id="hsa:54708"/>
<dbReference type="MANE-Select" id="ENST00000358935.3">
    <property type="protein sequence ID" value="ENSP00000351813.2"/>
    <property type="RefSeq nucleotide sequence ID" value="NM_017824.5"/>
    <property type="RefSeq protein sequence ID" value="NP_060294.1"/>
</dbReference>
<dbReference type="UCSC" id="uc001khx.1">
    <property type="organism name" value="human"/>
</dbReference>
<dbReference type="AGR" id="HGNC:26025"/>
<dbReference type="CTD" id="54708"/>
<dbReference type="DisGeNET" id="54708"/>
<dbReference type="GeneCards" id="MARCHF5"/>
<dbReference type="HGNC" id="HGNC:26025">
    <property type="gene designation" value="MARCHF5"/>
</dbReference>
<dbReference type="HPA" id="ENSG00000198060">
    <property type="expression patterns" value="Low tissue specificity"/>
</dbReference>
<dbReference type="MIM" id="610637">
    <property type="type" value="gene"/>
</dbReference>
<dbReference type="neXtProt" id="NX_Q9NX47"/>
<dbReference type="OpenTargets" id="ENSG00000198060"/>
<dbReference type="PharmGKB" id="PA128394672"/>
<dbReference type="VEuPathDB" id="HostDB:ENSG00000198060"/>
<dbReference type="eggNOG" id="KOG3053">
    <property type="taxonomic scope" value="Eukaryota"/>
</dbReference>
<dbReference type="GeneTree" id="ENSGT00390000009948"/>
<dbReference type="HOGENOM" id="CLU_046472_1_1_1"/>
<dbReference type="InParanoid" id="Q9NX47"/>
<dbReference type="OMA" id="KRYCWVC"/>
<dbReference type="OrthoDB" id="5817083at2759"/>
<dbReference type="PAN-GO" id="Q9NX47">
    <property type="GO annotations" value="4 GO annotations based on evolutionary models"/>
</dbReference>
<dbReference type="PhylomeDB" id="Q9NX47"/>
<dbReference type="TreeFam" id="TF316219"/>
<dbReference type="PathwayCommons" id="Q9NX47"/>
<dbReference type="SignaLink" id="Q9NX47"/>
<dbReference type="SIGNOR" id="Q9NX47"/>
<dbReference type="UniPathway" id="UPA00143"/>
<dbReference type="BioGRID-ORCS" id="54708">
    <property type="hits" value="177 hits in 1127 CRISPR screens"/>
</dbReference>
<dbReference type="ChiTaRS" id="MARCH5">
    <property type="organism name" value="human"/>
</dbReference>
<dbReference type="GeneWiki" id="MARCH5"/>
<dbReference type="GenomeRNAi" id="54708"/>
<dbReference type="Pharos" id="Q9NX47">
    <property type="development level" value="Tbio"/>
</dbReference>
<dbReference type="PRO" id="PR:Q9NX47"/>
<dbReference type="Proteomes" id="UP000005640">
    <property type="component" value="Chromosome 10"/>
</dbReference>
<dbReference type="RNAct" id="Q9NX47">
    <property type="molecule type" value="protein"/>
</dbReference>
<dbReference type="Bgee" id="ENSG00000198060">
    <property type="expression patterns" value="Expressed in sperm and 198 other cell types or tissues"/>
</dbReference>
<dbReference type="GO" id="GO:0005783">
    <property type="term" value="C:endoplasmic reticulum"/>
    <property type="evidence" value="ECO:0000314"/>
    <property type="project" value="UniProtKB"/>
</dbReference>
<dbReference type="GO" id="GO:0005789">
    <property type="term" value="C:endoplasmic reticulum membrane"/>
    <property type="evidence" value="ECO:0000314"/>
    <property type="project" value="UniProtKB"/>
</dbReference>
<dbReference type="GO" id="GO:0016020">
    <property type="term" value="C:membrane"/>
    <property type="evidence" value="ECO:0007005"/>
    <property type="project" value="UniProtKB"/>
</dbReference>
<dbReference type="GO" id="GO:0005741">
    <property type="term" value="C:mitochondrial outer membrane"/>
    <property type="evidence" value="ECO:0000314"/>
    <property type="project" value="UniProtKB"/>
</dbReference>
<dbReference type="GO" id="GO:0005739">
    <property type="term" value="C:mitochondrion"/>
    <property type="evidence" value="ECO:0000314"/>
    <property type="project" value="HPA"/>
</dbReference>
<dbReference type="GO" id="GO:0051020">
    <property type="term" value="F:GTPase binding"/>
    <property type="evidence" value="ECO:0000353"/>
    <property type="project" value="UniProtKB"/>
</dbReference>
<dbReference type="GO" id="GO:0061630">
    <property type="term" value="F:ubiquitin protein ligase activity"/>
    <property type="evidence" value="ECO:0000314"/>
    <property type="project" value="UniProtKB"/>
</dbReference>
<dbReference type="GO" id="GO:0008270">
    <property type="term" value="F:zinc ion binding"/>
    <property type="evidence" value="ECO:0007669"/>
    <property type="project" value="UniProtKB-KW"/>
</dbReference>
<dbReference type="GO" id="GO:0039532">
    <property type="term" value="P:negative regulation of cytoplasmic pattern recognition receptor signaling pathway"/>
    <property type="evidence" value="ECO:0000314"/>
    <property type="project" value="UniProt"/>
</dbReference>
<dbReference type="GO" id="GO:0141111">
    <property type="term" value="P:positive regulation of cGAS/STING signaling pathway"/>
    <property type="evidence" value="ECO:0000314"/>
    <property type="project" value="UniProt"/>
</dbReference>
<dbReference type="GO" id="GO:0090141">
    <property type="term" value="P:positive regulation of mitochondrial fission"/>
    <property type="evidence" value="ECO:0000315"/>
    <property type="project" value="UniProtKB"/>
</dbReference>
<dbReference type="GO" id="GO:1900227">
    <property type="term" value="P:positive regulation of NLRP3 inflammasome complex assembly"/>
    <property type="evidence" value="ECO:0000314"/>
    <property type="project" value="UniProt"/>
</dbReference>
<dbReference type="GO" id="GO:0051865">
    <property type="term" value="P:protein autoubiquitination"/>
    <property type="evidence" value="ECO:0000314"/>
    <property type="project" value="UniProtKB"/>
</dbReference>
<dbReference type="GO" id="GO:0044314">
    <property type="term" value="P:protein K27-linked ubiquitination"/>
    <property type="evidence" value="ECO:0000314"/>
    <property type="project" value="UniProt"/>
</dbReference>
<dbReference type="GO" id="GO:0070936">
    <property type="term" value="P:protein K48-linked ubiquitination"/>
    <property type="evidence" value="ECO:0000314"/>
    <property type="project" value="UniProt"/>
</dbReference>
<dbReference type="GO" id="GO:0070534">
    <property type="term" value="P:protein K63-linked ubiquitination"/>
    <property type="evidence" value="ECO:0000314"/>
    <property type="project" value="UniProt"/>
</dbReference>
<dbReference type="GO" id="GO:0070585">
    <property type="term" value="P:protein localization to mitochondrion"/>
    <property type="evidence" value="ECO:0000315"/>
    <property type="project" value="UniProtKB"/>
</dbReference>
<dbReference type="GO" id="GO:0000209">
    <property type="term" value="P:protein polyubiquitination"/>
    <property type="evidence" value="ECO:0000314"/>
    <property type="project" value="UniProtKB"/>
</dbReference>
<dbReference type="GO" id="GO:0090140">
    <property type="term" value="P:regulation of mitochondrial fission"/>
    <property type="evidence" value="ECO:0000315"/>
    <property type="project" value="UniProtKB"/>
</dbReference>
<dbReference type="CDD" id="cd16701">
    <property type="entry name" value="RING_CH-C4HC3_MARCH5"/>
    <property type="match status" value="1"/>
</dbReference>
<dbReference type="FunFam" id="3.30.40.10:FF:000262">
    <property type="entry name" value="E3 ubiquitin-protein ligase MARCH5"/>
    <property type="match status" value="1"/>
</dbReference>
<dbReference type="Gene3D" id="3.30.40.10">
    <property type="entry name" value="Zinc/RING finger domain, C3HC4 (zinc finger)"/>
    <property type="match status" value="1"/>
</dbReference>
<dbReference type="InterPro" id="IPR011016">
    <property type="entry name" value="Znf_RING-CH"/>
</dbReference>
<dbReference type="InterPro" id="IPR013083">
    <property type="entry name" value="Znf_RING/FYVE/PHD"/>
</dbReference>
<dbReference type="PANTHER" id="PTHR46283">
    <property type="entry name" value="E3 UBIQUITIN-PROTEIN LIGASE MARCH5"/>
    <property type="match status" value="1"/>
</dbReference>
<dbReference type="Pfam" id="PF12906">
    <property type="entry name" value="RINGv"/>
    <property type="match status" value="1"/>
</dbReference>
<dbReference type="SMART" id="SM00744">
    <property type="entry name" value="RINGv"/>
    <property type="match status" value="1"/>
</dbReference>
<dbReference type="SUPFAM" id="SSF57850">
    <property type="entry name" value="RING/U-box"/>
    <property type="match status" value="1"/>
</dbReference>
<dbReference type="PROSITE" id="PS51292">
    <property type="entry name" value="ZF_RING_CH"/>
    <property type="match status" value="1"/>
</dbReference>
<accession>Q9NX47</accession>
<comment type="function">
    <text evidence="1 5 7 8 9 12 13 14 15">Mitochondrial E3 ubiquitin-protein ligase that plays a crucial role in the control of mitochondrial morphology by acting as a positive regulator of mitochondrial fission and as an important regulator of immune response (PubMed:16874301, PubMed:17606867, PubMed:26246171, PubMed:31881323). Plays a crucial role in maintaining mitochondrial homeostasis by regulating the dynamics of mitochondria through the ubiquitination of key proteins involved in fission and fusion such as FIS1, DNM1L and MFN1 (PubMed:16874301, PubMed:17606867). Acts as a critical determinant of mitotic apoptosis through both MCL1-dependent and -independent pathways (By similarity). Turns off persistent immune signaling by degrading oligomeric complexes of retinoic acid-inducible gene I/DDX58 and mitochondrial antiviral-signaling protein/MAVS formed upon RNA virus infection (PubMed:26246171, PubMed:31881323). Promotes STING-mediated type-I interferon production via 'Lys-63'-linked ubiquitination of STING1 thereby preserving its activity and preventing the formation of inactive STING1 polymers (PubMed:37916870). Plays also an essential role in the formation of PEX3-containing vesicles in the de novo biogenesis of peroxisomes from mitochondria (PubMed:39423820, PubMed:39423819). Acts as a regulator of NLRP3 inflammasome activation on the mitochondria by mediating the 'Lys-27'-linked polyubiquitination of NLRP3, positively regulating the NLRP3-NEK7 complex formation and NLRP3 oligomerization (PubMed:37575012).</text>
</comment>
<comment type="catalytic activity">
    <reaction evidence="10 11">
        <text>S-ubiquitinyl-[E2 ubiquitin-conjugating enzyme]-L-cysteine + [acceptor protein]-L-lysine = [E2 ubiquitin-conjugating enzyme]-L-cysteine + N(6)-ubiquitinyl-[acceptor protein]-L-lysine.</text>
        <dbReference type="EC" id="2.3.2.27"/>
    </reaction>
</comment>
<comment type="pathway">
    <text>Protein modification; protein ubiquitination.</text>
</comment>
<comment type="subunit">
    <text evidence="5 6 7 9">Monomer and homodimer. Interacts with MFN1, MFN2, DNM1L and FIS1.</text>
</comment>
<comment type="interaction">
    <interactant intactId="EBI-2341610">
        <id>Q9NX47</id>
    </interactant>
    <interactant intactId="EBI-7054139">
        <id>Q68DC2</id>
        <label>ANKS6</label>
    </interactant>
    <organismsDiffer>false</organismsDiffer>
    <experiments>3</experiments>
</comment>
<comment type="interaction">
    <interactant intactId="EBI-2341610">
        <id>Q9NX47</id>
    </interactant>
    <interactant intactId="EBI-13059134">
        <id>Q13520</id>
        <label>AQP6</label>
    </interactant>
    <organismsDiffer>false</organismsDiffer>
    <experiments>3</experiments>
</comment>
<comment type="interaction">
    <interactant intactId="EBI-2341610">
        <id>Q9NX47</id>
    </interactant>
    <interactant intactId="EBI-700794">
        <id>Q13323</id>
        <label>BIK</label>
    </interactant>
    <organismsDiffer>false</organismsDiffer>
    <experiments>3</experiments>
</comment>
<comment type="interaction">
    <interactant intactId="EBI-2341610">
        <id>Q9NX47</id>
    </interactant>
    <interactant intactId="EBI-4402847">
        <id>Q12981</id>
        <label>BNIP1</label>
    </interactant>
    <organismsDiffer>false</organismsDiffer>
    <experiments>3</experiments>
</comment>
<comment type="interaction">
    <interactant intactId="EBI-2341610">
        <id>Q9NX47</id>
    </interactant>
    <interactant intactId="EBI-2130213">
        <id>Q99675</id>
        <label>CGRRF1</label>
    </interactant>
    <organismsDiffer>false</organismsDiffer>
    <experiments>3</experiments>
</comment>
<comment type="interaction">
    <interactant intactId="EBI-2341610">
        <id>Q9NX47</id>
    </interactant>
    <interactant intactId="EBI-716083">
        <id>O43583</id>
        <label>DENR</label>
    </interactant>
    <organismsDiffer>false</organismsDiffer>
    <experiments>2</experiments>
</comment>
<comment type="interaction">
    <interactant intactId="EBI-2341610">
        <id>Q9NX47</id>
    </interactant>
    <interactant intactId="EBI-781551">
        <id>Q9Y282</id>
        <label>ERGIC3</label>
    </interactant>
    <organismsDiffer>false</organismsDiffer>
    <experiments>3</experiments>
</comment>
<comment type="interaction">
    <interactant intactId="EBI-2341610">
        <id>Q9NX47</id>
    </interactant>
    <interactant intactId="EBI-743099">
        <id>Q969F0</id>
        <label>FATE1</label>
    </interactant>
    <organismsDiffer>false</organismsDiffer>
    <experiments>4</experiments>
</comment>
<comment type="interaction">
    <interactant intactId="EBI-2341610">
        <id>Q9NX47</id>
    </interactant>
    <interactant intactId="EBI-11721746">
        <id>Q8TED1</id>
        <label>GPX8</label>
    </interactant>
    <organismsDiffer>false</organismsDiffer>
    <experiments>3</experiments>
</comment>
<comment type="interaction">
    <interactant intactId="EBI-2341610">
        <id>Q9NX47</id>
    </interactant>
    <interactant intactId="EBI-18053395">
        <id>Q7Z5P4</id>
        <label>HSD17B13</label>
    </interactant>
    <organismsDiffer>false</organismsDiffer>
    <experiments>3</experiments>
</comment>
<comment type="interaction">
    <interactant intactId="EBI-2341610">
        <id>Q9NX47</id>
    </interactant>
    <interactant intactId="EBI-3867271">
        <id>Q9NQG1</id>
        <label>MANBAL</label>
    </interactant>
    <organismsDiffer>false</organismsDiffer>
    <experiments>3</experiments>
</comment>
<comment type="interaction">
    <interactant intactId="EBI-2341610">
        <id>Q9NX47</id>
    </interactant>
    <interactant intactId="EBI-3324756">
        <id>O95140</id>
        <label>MFN2</label>
    </interactant>
    <organismsDiffer>false</organismsDiffer>
    <experiments>4</experiments>
</comment>
<comment type="interaction">
    <interactant intactId="EBI-2341610">
        <id>Q9NX47</id>
    </interactant>
    <interactant intactId="EBI-12382569">
        <id>Q2M2E3</id>
        <label>ODF4</label>
    </interactant>
    <organismsDiffer>false</organismsDiffer>
    <experiments>3</experiments>
</comment>
<comment type="interaction">
    <interactant intactId="EBI-2341610">
        <id>Q9NX47</id>
    </interactant>
    <interactant intactId="EBI-1220572">
        <id>P54829</id>
        <label>PTPN5</label>
    </interactant>
    <organismsDiffer>false</organismsDiffer>
    <experiments>3</experiments>
</comment>
<comment type="interaction">
    <interactant intactId="EBI-2341610">
        <id>Q9NX47</id>
    </interactant>
    <interactant intactId="EBI-743502">
        <id>Q8WWV3</id>
        <label>RTN4IP1</label>
    </interactant>
    <organismsDiffer>false</organismsDiffer>
    <experiments>3</experiments>
</comment>
<comment type="interaction">
    <interactant intactId="EBI-2341610">
        <id>Q9NX47</id>
    </interactant>
    <interactant intactId="EBI-3920694">
        <id>Q9NR31</id>
        <label>SAR1A</label>
    </interactant>
    <organismsDiffer>false</organismsDiffer>
    <experiments>3</experiments>
</comment>
<comment type="interaction">
    <interactant intactId="EBI-2341610">
        <id>Q9NX47</id>
    </interactant>
    <interactant intactId="EBI-2684237">
        <id>O00767</id>
        <label>SCD</label>
    </interactant>
    <organismsDiffer>false</organismsDiffer>
    <experiments>3</experiments>
</comment>
<comment type="interaction">
    <interactant intactId="EBI-2341610">
        <id>Q9NX47</id>
    </interactant>
    <interactant intactId="EBI-1046170">
        <id>O95470</id>
        <label>SGPL1</label>
    </interactant>
    <organismsDiffer>false</organismsDiffer>
    <experiments>3</experiments>
</comment>
<comment type="interaction">
    <interactant intactId="EBI-2341610">
        <id>Q9NX47</id>
    </interactant>
    <interactant intactId="EBI-20117546">
        <id>Q9H169-2</id>
        <label>STMN4</label>
    </interactant>
    <organismsDiffer>false</organismsDiffer>
    <experiments>3</experiments>
</comment>
<comment type="interaction">
    <interactant intactId="EBI-2341610">
        <id>Q9NX47</id>
    </interactant>
    <interactant intactId="EBI-6268651">
        <id>Q9NPL8</id>
        <label>TIMMDC1</label>
    </interactant>
    <organismsDiffer>false</organismsDiffer>
    <experiments>3</experiments>
</comment>
<comment type="interaction">
    <interactant intactId="EBI-2341610">
        <id>Q9NX47</id>
    </interactant>
    <interactant intactId="EBI-7238458">
        <id>Q8IV31</id>
        <label>TMEM139</label>
    </interactant>
    <organismsDiffer>false</organismsDiffer>
    <experiments>3</experiments>
</comment>
<comment type="interaction">
    <interactant intactId="EBI-2341610">
        <id>Q9NX47</id>
    </interactant>
    <interactant intactId="EBI-8638294">
        <id>Q9NUH8</id>
        <label>TMEM14B</label>
    </interactant>
    <organismsDiffer>false</organismsDiffer>
    <experiments>3</experiments>
</comment>
<comment type="interaction">
    <interactant intactId="EBI-2341610">
        <id>Q9NX47</id>
    </interactant>
    <interactant intactId="EBI-3390054">
        <id>P0CG48</id>
        <label>UBC</label>
    </interactant>
    <organismsDiffer>false</organismsDiffer>
    <experiments>2</experiments>
</comment>
<comment type="interaction">
    <interactant intactId="EBI-2341610">
        <id>Q9NX47</id>
    </interactant>
    <interactant intactId="EBI-716589">
        <id>Q96B02</id>
        <label>UBE2W</label>
    </interactant>
    <organismsDiffer>false</organismsDiffer>
    <experiments>5</experiments>
</comment>
<comment type="interaction">
    <interactant intactId="EBI-2341610">
        <id>Q9NX47</id>
    </interactant>
    <interactant intactId="EBI-10285774">
        <id>Q96FI0</id>
        <label>UBE2W</label>
    </interactant>
    <organismsDiffer>false</organismsDiffer>
    <experiments>6</experiments>
</comment>
<comment type="interaction">
    <interactant intactId="EBI-2341610">
        <id>Q9NX47</id>
    </interactant>
    <interactant intactId="EBI-2799703">
        <id>O95070</id>
        <label>YIF1A</label>
    </interactant>
    <organismsDiffer>false</organismsDiffer>
    <experiments>3</experiments>
</comment>
<comment type="subcellular location">
    <subcellularLocation>
        <location evidence="5">Mitochondrion outer membrane</location>
        <topology evidence="2">Multi-pass membrane protein</topology>
    </subcellularLocation>
    <subcellularLocation>
        <location evidence="4 13">Endoplasmic reticulum membrane</location>
        <topology evidence="2">Multi-pass membrane protein</topology>
    </subcellularLocation>
    <subcellularLocation>
        <location evidence="14">Peroxisome membrane</location>
    </subcellularLocation>
    <text evidence="4 5">Authors show that the protein can be detected in endoplasmic reticulum (PubMed:14722266). Authors (PubMed:16874301) show its presence only in mitochondria (PubMed:16874301).</text>
</comment>
<comment type="tissue specificity">
    <text evidence="5">Expressed in brain, heart, liver, lung, spleen, stomach, testis, skeletal and muscle.</text>
</comment>
<comment type="domain">
    <text evidence="3">The RING-CH-type zinc finger domain is required for E3 ligase activity.</text>
</comment>
<comment type="PTM">
    <text evidence="5">Autoubiquitinated leading to degradation (short half-life).</text>
</comment>
<comment type="miscellaneous">
    <text>By binding to and ubiquitinating two ALS1 variants of SOD1 (mSOD1 variants Arg-86 and Ala-94) it attenuates their cytotoxicity.</text>
</comment>
<gene>
    <name evidence="17" type="primary">MARCHF5</name>
    <name type="synonym">MARCH5</name>
    <name type="synonym">RNF153</name>
</gene>
<organism>
    <name type="scientific">Homo sapiens</name>
    <name type="common">Human</name>
    <dbReference type="NCBI Taxonomy" id="9606"/>
    <lineage>
        <taxon>Eukaryota</taxon>
        <taxon>Metazoa</taxon>
        <taxon>Chordata</taxon>
        <taxon>Craniata</taxon>
        <taxon>Vertebrata</taxon>
        <taxon>Euteleostomi</taxon>
        <taxon>Mammalia</taxon>
        <taxon>Eutheria</taxon>
        <taxon>Euarchontoglires</taxon>
        <taxon>Primates</taxon>
        <taxon>Haplorrhini</taxon>
        <taxon>Catarrhini</taxon>
        <taxon>Hominidae</taxon>
        <taxon>Homo</taxon>
    </lineage>
</organism>
<sequence>MPDQALQQMLDRSCWVCFATDEDDRTAEWVRPCRCRGSTKWVHQACLQRWVDEKQRGNSTARVACPQCNAEYLIVFPKLGPVVYVLDLADRLISKACPFAAAGIMVGSIYWTAVTYGAVTVMQVVGHKEGLDVMERADPLFLLIGLPTIPVMLILGKMIRWEDYVLRLWRKYSNKLQILNSIFPGIGCPVPRIPAEANPLADHVSATRILCGALVFPTIATIVGKLMFSSVNSNLQRTILGGIAFVAIKGAFKVYFKQQQYLRQAHRKILNYPEQEEA</sequence>
<protein>
    <recommendedName>
        <fullName>E3 ubiquitin-protein ligase MARCHF5</fullName>
        <ecNumber evidence="10 11">2.3.2.27</ecNumber>
    </recommendedName>
    <alternativeName>
        <fullName>Membrane-associated RING finger protein 5</fullName>
    </alternativeName>
    <alternativeName>
        <fullName>Membrane-associated RING-CH protein V</fullName>
        <shortName>MARCH-V</shortName>
    </alternativeName>
    <alternativeName>
        <fullName>Mitochondrial ubiquitin ligase</fullName>
        <shortName>MITOL</shortName>
    </alternativeName>
    <alternativeName>
        <fullName>RING finger protein 153</fullName>
    </alternativeName>
    <alternativeName>
        <fullName evidence="16">RING-type E3 ubiquitin transferase MARCHF5</fullName>
    </alternativeName>
</protein>
<keyword id="KW-0256">Endoplasmic reticulum</keyword>
<keyword id="KW-0472">Membrane</keyword>
<keyword id="KW-0479">Metal-binding</keyword>
<keyword id="KW-0496">Mitochondrion</keyword>
<keyword id="KW-1000">Mitochondrion outer membrane</keyword>
<keyword id="KW-0576">Peroxisome</keyword>
<keyword id="KW-1267">Proteomics identification</keyword>
<keyword id="KW-1185">Reference proteome</keyword>
<keyword id="KW-0808">Transferase</keyword>
<keyword id="KW-0812">Transmembrane</keyword>
<keyword id="KW-1133">Transmembrane helix</keyword>
<keyword id="KW-0832">Ubl conjugation</keyword>
<keyword id="KW-0833">Ubl conjugation pathway</keyword>
<keyword id="KW-0862">Zinc</keyword>
<keyword id="KW-0863">Zinc-finger</keyword>